<comment type="function">
    <text evidence="1">Involved in the binding of tRNA to the ribosomes.</text>
</comment>
<comment type="subunit">
    <text evidence="1">Part of the 30S ribosomal subunit.</text>
</comment>
<comment type="similarity">
    <text evidence="1">Belongs to the universal ribosomal protein uS10 family.</text>
</comment>
<sequence length="103" mass="11749">MSKQKIRIRLKAFDYKLIDQSAAEIVDTAKRTGAIVKGPVPLPTRMKRFDILRSPHVNKTSRDQLEIRTHQRLMDIVDPTDKTVDALMKLDLPAGVDVEIKLQ</sequence>
<accession>A1WHC4</accession>
<dbReference type="EMBL" id="CP000542">
    <property type="protein sequence ID" value="ABM57031.1"/>
    <property type="molecule type" value="Genomic_DNA"/>
</dbReference>
<dbReference type="RefSeq" id="WP_005796953.1">
    <property type="nucleotide sequence ID" value="NC_008786.1"/>
</dbReference>
<dbReference type="SMR" id="A1WHC4"/>
<dbReference type="STRING" id="391735.Veis_1263"/>
<dbReference type="GeneID" id="76459910"/>
<dbReference type="KEGG" id="vei:Veis_1263"/>
<dbReference type="eggNOG" id="COG0051">
    <property type="taxonomic scope" value="Bacteria"/>
</dbReference>
<dbReference type="HOGENOM" id="CLU_122625_1_3_4"/>
<dbReference type="OrthoDB" id="9804464at2"/>
<dbReference type="Proteomes" id="UP000000374">
    <property type="component" value="Chromosome"/>
</dbReference>
<dbReference type="GO" id="GO:1990904">
    <property type="term" value="C:ribonucleoprotein complex"/>
    <property type="evidence" value="ECO:0007669"/>
    <property type="project" value="UniProtKB-KW"/>
</dbReference>
<dbReference type="GO" id="GO:0005840">
    <property type="term" value="C:ribosome"/>
    <property type="evidence" value="ECO:0007669"/>
    <property type="project" value="UniProtKB-KW"/>
</dbReference>
<dbReference type="GO" id="GO:0003735">
    <property type="term" value="F:structural constituent of ribosome"/>
    <property type="evidence" value="ECO:0007669"/>
    <property type="project" value="InterPro"/>
</dbReference>
<dbReference type="GO" id="GO:0000049">
    <property type="term" value="F:tRNA binding"/>
    <property type="evidence" value="ECO:0007669"/>
    <property type="project" value="UniProtKB-UniRule"/>
</dbReference>
<dbReference type="GO" id="GO:0006412">
    <property type="term" value="P:translation"/>
    <property type="evidence" value="ECO:0007669"/>
    <property type="project" value="UniProtKB-UniRule"/>
</dbReference>
<dbReference type="FunFam" id="3.30.70.600:FF:000001">
    <property type="entry name" value="30S ribosomal protein S10"/>
    <property type="match status" value="1"/>
</dbReference>
<dbReference type="Gene3D" id="3.30.70.600">
    <property type="entry name" value="Ribosomal protein S10 domain"/>
    <property type="match status" value="1"/>
</dbReference>
<dbReference type="HAMAP" id="MF_00508">
    <property type="entry name" value="Ribosomal_uS10"/>
    <property type="match status" value="1"/>
</dbReference>
<dbReference type="InterPro" id="IPR001848">
    <property type="entry name" value="Ribosomal_uS10"/>
</dbReference>
<dbReference type="InterPro" id="IPR018268">
    <property type="entry name" value="Ribosomal_uS10_CS"/>
</dbReference>
<dbReference type="InterPro" id="IPR027486">
    <property type="entry name" value="Ribosomal_uS10_dom"/>
</dbReference>
<dbReference type="InterPro" id="IPR036838">
    <property type="entry name" value="Ribosomal_uS10_dom_sf"/>
</dbReference>
<dbReference type="NCBIfam" id="NF001861">
    <property type="entry name" value="PRK00596.1"/>
    <property type="match status" value="1"/>
</dbReference>
<dbReference type="NCBIfam" id="TIGR01049">
    <property type="entry name" value="rpsJ_bact"/>
    <property type="match status" value="1"/>
</dbReference>
<dbReference type="PANTHER" id="PTHR11700">
    <property type="entry name" value="30S RIBOSOMAL PROTEIN S10 FAMILY MEMBER"/>
    <property type="match status" value="1"/>
</dbReference>
<dbReference type="Pfam" id="PF00338">
    <property type="entry name" value="Ribosomal_S10"/>
    <property type="match status" value="1"/>
</dbReference>
<dbReference type="PRINTS" id="PR00971">
    <property type="entry name" value="RIBOSOMALS10"/>
</dbReference>
<dbReference type="SMART" id="SM01403">
    <property type="entry name" value="Ribosomal_S10"/>
    <property type="match status" value="1"/>
</dbReference>
<dbReference type="SUPFAM" id="SSF54999">
    <property type="entry name" value="Ribosomal protein S10"/>
    <property type="match status" value="1"/>
</dbReference>
<dbReference type="PROSITE" id="PS00361">
    <property type="entry name" value="RIBOSOMAL_S10"/>
    <property type="match status" value="1"/>
</dbReference>
<name>RS10_VEREI</name>
<organism>
    <name type="scientific">Verminephrobacter eiseniae (strain EF01-2)</name>
    <dbReference type="NCBI Taxonomy" id="391735"/>
    <lineage>
        <taxon>Bacteria</taxon>
        <taxon>Pseudomonadati</taxon>
        <taxon>Pseudomonadota</taxon>
        <taxon>Betaproteobacteria</taxon>
        <taxon>Burkholderiales</taxon>
        <taxon>Comamonadaceae</taxon>
        <taxon>Verminephrobacter</taxon>
    </lineage>
</organism>
<reference key="1">
    <citation type="submission" date="2006-12" db="EMBL/GenBank/DDBJ databases">
        <title>Complete sequence of chromosome 1 of Verminephrobacter eiseniae EF01-2.</title>
        <authorList>
            <person name="Copeland A."/>
            <person name="Lucas S."/>
            <person name="Lapidus A."/>
            <person name="Barry K."/>
            <person name="Detter J.C."/>
            <person name="Glavina del Rio T."/>
            <person name="Dalin E."/>
            <person name="Tice H."/>
            <person name="Pitluck S."/>
            <person name="Chertkov O."/>
            <person name="Brettin T."/>
            <person name="Bruce D."/>
            <person name="Han C."/>
            <person name="Tapia R."/>
            <person name="Gilna P."/>
            <person name="Schmutz J."/>
            <person name="Larimer F."/>
            <person name="Land M."/>
            <person name="Hauser L."/>
            <person name="Kyrpides N."/>
            <person name="Kim E."/>
            <person name="Stahl D."/>
            <person name="Richardson P."/>
        </authorList>
    </citation>
    <scope>NUCLEOTIDE SEQUENCE [LARGE SCALE GENOMIC DNA]</scope>
    <source>
        <strain>EF01-2</strain>
    </source>
</reference>
<proteinExistence type="inferred from homology"/>
<gene>
    <name evidence="1" type="primary">rpsJ</name>
    <name type="ordered locus">Veis_1263</name>
</gene>
<feature type="chain" id="PRO_1000015133" description="Small ribosomal subunit protein uS10">
    <location>
        <begin position="1"/>
        <end position="103"/>
    </location>
</feature>
<protein>
    <recommendedName>
        <fullName evidence="1">Small ribosomal subunit protein uS10</fullName>
    </recommendedName>
    <alternativeName>
        <fullName evidence="2">30S ribosomal protein S10</fullName>
    </alternativeName>
</protein>
<evidence type="ECO:0000255" key="1">
    <source>
        <dbReference type="HAMAP-Rule" id="MF_00508"/>
    </source>
</evidence>
<evidence type="ECO:0000305" key="2"/>
<keyword id="KW-1185">Reference proteome</keyword>
<keyword id="KW-0687">Ribonucleoprotein</keyword>
<keyword id="KW-0689">Ribosomal protein</keyword>